<evidence type="ECO:0000250" key="1">
    <source>
        <dbReference type="UniProtKB" id="P00426"/>
    </source>
</evidence>
<evidence type="ECO:0000250" key="2">
    <source>
        <dbReference type="UniProtKB" id="P00427"/>
    </source>
</evidence>
<evidence type="ECO:0000250" key="3">
    <source>
        <dbReference type="UniProtKB" id="P12787"/>
    </source>
</evidence>
<evidence type="ECO:0000250" key="4">
    <source>
        <dbReference type="UniProtKB" id="P20674"/>
    </source>
</evidence>
<evidence type="ECO:0000305" key="5"/>
<comment type="function">
    <text evidence="2">Component of the cytochrome c oxidase, the last enzyme in the mitochondrial electron transport chain which drives oxidative phosphorylation. The respiratory chain contains 3 multisubunit complexes succinate dehydrogenase (complex II, CII), ubiquinol-cytochrome c oxidoreductase (cytochrome b-c1 complex, complex III, CIII) and cytochrome c oxidase (complex IV, CIV), that cooperate to transfer electrons derived from NADH and succinate to molecular oxygen, creating an electrochemical gradient over the inner membrane that drives transmembrane transport and the ATP synthase. Cytochrome c oxidase is the component of the respiratory chain that catalyzes the reduction of oxygen to water. Electrons originating from reduced cytochrome c in the intermembrane space (IMS) are transferred via the dinuclear copper A center (CU(A)) of subunit 2 and heme A of subunit 1 to the active site in subunit 1, a binuclear center (BNC) formed by heme A3 and copper B (CU(B)). The BNC reduces molecular oxygen to 2 water molecules using 4 electrons from cytochrome c in the IMS and 4 protons from the mitochondrial matrix.</text>
</comment>
<comment type="pathway">
    <text evidence="2">Energy metabolism; oxidative phosphorylation.</text>
</comment>
<comment type="subunit">
    <text evidence="1 4">Component of the cytochrome c oxidase (complex IV, CIV), a multisubunit enzyme composed of 14 subunits. The complex is composed of a catalytic core of 3 subunits MT-CO1, MT-CO2 and MT-CO3, encoded in the mitochondrial DNA, and 11 supernumerary subunits COX4I, COX5A, COX5B, COX6A, COX6B, COX6C, COX7A, COX7B, COX7C, COX8 and NDUFA4, which are encoded in the nuclear genome. The complex exists as a monomer or a dimer and forms supercomplexes (SCs) in the inner mitochondrial membrane with NADH-ubiquinone oxidoreductase (complex I, CI) and ubiquinol-cytochrome c oxidoreductase (cytochrome b-c1 complex, complex III, CIII), resulting in different assemblies (supercomplex SCI(1)III(2)IV(1) and megacomplex MCI(2)III(2)IV(2)) (By similarity). Interacts with AFG1L (By similarity). Interacts with RAB5IF (By similarity).</text>
</comment>
<comment type="subcellular location">
    <subcellularLocation>
        <location evidence="1">Mitochondrion inner membrane</location>
        <topology evidence="1">Peripheral membrane protein</topology>
        <orientation evidence="1">Matrix side</orientation>
    </subcellularLocation>
</comment>
<comment type="PTM">
    <text evidence="4">In response to mitochondrial stress, the precursor protein is ubiquitinated by the SIFI complex in the cytoplasm before mitochondrial import, leading to its degradation. Within the SIFI complex, UBR4 initiates ubiquitin chain that are further elongated or branched by KCMF1.</text>
</comment>
<comment type="similarity">
    <text evidence="5">Belongs to the cytochrome c oxidase subunit 5A family.</text>
</comment>
<accession>B0VYX7</accession>
<keyword id="KW-0007">Acetylation</keyword>
<keyword id="KW-0349">Heme</keyword>
<keyword id="KW-0408">Iron</keyword>
<keyword id="KW-0472">Membrane</keyword>
<keyword id="KW-0479">Metal-binding</keyword>
<keyword id="KW-0496">Mitochondrion</keyword>
<keyword id="KW-0999">Mitochondrion inner membrane</keyword>
<keyword id="KW-0597">Phosphoprotein</keyword>
<keyword id="KW-0809">Transit peptide</keyword>
<keyword id="KW-0832">Ubl conjugation</keyword>
<reference key="1">
    <citation type="journal article" date="2008" name="BMC Evol. Biol.">
        <title>Molecular evolution of the cytochrome c oxidase subunit 5A gene in primates.</title>
        <authorList>
            <person name="Uddin M."/>
            <person name="Opazo J.C."/>
            <person name="Wildman D.E."/>
            <person name="Sherwood C.C."/>
            <person name="Hof P.R."/>
            <person name="Goodman M."/>
            <person name="Grossman L.I."/>
        </authorList>
    </citation>
    <scope>NUCLEOTIDE SEQUENCE [MRNA]</scope>
</reference>
<organism>
    <name type="scientific">Colobus guereza</name>
    <name type="common">Mantled guereza</name>
    <name type="synonym">Eastern black-and-white colobus monkey</name>
    <dbReference type="NCBI Taxonomy" id="33548"/>
    <lineage>
        <taxon>Eukaryota</taxon>
        <taxon>Metazoa</taxon>
        <taxon>Chordata</taxon>
        <taxon>Craniata</taxon>
        <taxon>Vertebrata</taxon>
        <taxon>Euteleostomi</taxon>
        <taxon>Mammalia</taxon>
        <taxon>Eutheria</taxon>
        <taxon>Euarchontoglires</taxon>
        <taxon>Primates</taxon>
        <taxon>Haplorrhini</taxon>
        <taxon>Catarrhini</taxon>
        <taxon>Cercopithecidae</taxon>
        <taxon>Colobinae</taxon>
        <taxon>Colobus</taxon>
    </lineage>
</organism>
<proteinExistence type="evidence at transcript level"/>
<sequence length="150" mass="16685">MLGAALRRCAVAATTWAGPRGLLHSSRTPGPAAAIQSVRCYSHGSHETDEEFDARWVTYFNKPDIDAWELRKGINTLVTYDLVPEPKIIDAALRACRRLNDFASTVRILEAVKDKAGPHKEIYPYVIQELRPTLNELGISTPEELGLDKV</sequence>
<dbReference type="EMBL" id="DQ987244">
    <property type="protein sequence ID" value="ABK92291.1"/>
    <property type="molecule type" value="mRNA"/>
</dbReference>
<dbReference type="SMR" id="B0VYX7"/>
<dbReference type="UniPathway" id="UPA00705"/>
<dbReference type="GO" id="GO:0005743">
    <property type="term" value="C:mitochondrial inner membrane"/>
    <property type="evidence" value="ECO:0007669"/>
    <property type="project" value="UniProtKB-SubCell"/>
</dbReference>
<dbReference type="GO" id="GO:0045277">
    <property type="term" value="C:respiratory chain complex IV"/>
    <property type="evidence" value="ECO:0007669"/>
    <property type="project" value="InterPro"/>
</dbReference>
<dbReference type="GO" id="GO:0046872">
    <property type="term" value="F:metal ion binding"/>
    <property type="evidence" value="ECO:0007669"/>
    <property type="project" value="UniProtKB-KW"/>
</dbReference>
<dbReference type="GO" id="GO:0006123">
    <property type="term" value="P:mitochondrial electron transport, cytochrome c to oxygen"/>
    <property type="evidence" value="ECO:0007669"/>
    <property type="project" value="InterPro"/>
</dbReference>
<dbReference type="CDD" id="cd00923">
    <property type="entry name" value="Cyt_c_Oxidase_Va"/>
    <property type="match status" value="1"/>
</dbReference>
<dbReference type="FunFam" id="1.25.40.40:FF:000002">
    <property type="entry name" value="cytochrome c oxidase subunit 5A, mitochondrial"/>
    <property type="match status" value="1"/>
</dbReference>
<dbReference type="Gene3D" id="1.25.40.40">
    <property type="entry name" value="Cytochrome c oxidase, subunit Va/VI"/>
    <property type="match status" value="1"/>
</dbReference>
<dbReference type="InterPro" id="IPR003204">
    <property type="entry name" value="Cyt_c_oxidase_su5A/6"/>
</dbReference>
<dbReference type="InterPro" id="IPR036545">
    <property type="entry name" value="Cyt_c_oxidase_su5A/6_sf"/>
</dbReference>
<dbReference type="PANTHER" id="PTHR14200">
    <property type="entry name" value="CYTOCHROME C OXIDASE POLYPEPTIDE"/>
    <property type="match status" value="1"/>
</dbReference>
<dbReference type="PANTHER" id="PTHR14200:SF16">
    <property type="entry name" value="CYTOCHROME C OXIDASE SUBUNIT 5A, MITOCHONDRIAL"/>
    <property type="match status" value="1"/>
</dbReference>
<dbReference type="Pfam" id="PF02284">
    <property type="entry name" value="COX5A"/>
    <property type="match status" value="1"/>
</dbReference>
<dbReference type="SUPFAM" id="SSF48479">
    <property type="entry name" value="Cytochrome c oxidase subunit E"/>
    <property type="match status" value="1"/>
</dbReference>
<gene>
    <name type="primary">COX5A</name>
</gene>
<protein>
    <recommendedName>
        <fullName>Cytochrome c oxidase subunit 5A, mitochondrial</fullName>
    </recommendedName>
    <alternativeName>
        <fullName>Cytochrome c oxidase polypeptide Va</fullName>
    </alternativeName>
</protein>
<name>COX5A_COLGU</name>
<feature type="transit peptide" description="Mitochondrion" evidence="1">
    <location>
        <begin position="1"/>
        <end position="41"/>
    </location>
</feature>
<feature type="chain" id="PRO_0000355978" description="Cytochrome c oxidase subunit 5A, mitochondrial">
    <location>
        <begin position="42"/>
        <end position="150"/>
    </location>
</feature>
<feature type="short sequence motif" description="SIFI-degron" evidence="4">
    <location>
        <begin position="2"/>
        <end position="17"/>
    </location>
</feature>
<feature type="modified residue" description="N6-acetyllysine" evidence="3">
    <location>
        <position position="87"/>
    </location>
</feature>
<feature type="modified residue" description="N6-acetyllysine" evidence="3">
    <location>
        <position position="113"/>
    </location>
</feature>
<feature type="modified residue" description="Phosphothreonine" evidence="4">
    <location>
        <position position="141"/>
    </location>
</feature>